<comment type="function">
    <text evidence="1">Necessary for protein translocation in the endoplasmic reticulum.</text>
</comment>
<comment type="subunit">
    <text evidence="1">Heterotrimeric complex composed of SEC61-alpha, SEC61-beta and SEC61-gamma.</text>
</comment>
<comment type="subcellular location">
    <subcellularLocation>
        <location evidence="3">Endoplasmic reticulum membrane</location>
        <topology evidence="3">Single-pass membrane protein</topology>
    </subcellularLocation>
</comment>
<comment type="similarity">
    <text evidence="3">Belongs to the SecE/SEC61-gamma family.</text>
</comment>
<sequence length="68" mass="7564">MDKVVKFAEPGRAFAKDSIRLVKRCTKPDRKEFQKIAIATAVGFAIMGFIGFFVKLIHIPINNIIVGS</sequence>
<evidence type="ECO:0000250" key="1"/>
<evidence type="ECO:0000255" key="2"/>
<evidence type="ECO:0000305" key="3"/>
<name>S61G1_DROME</name>
<protein>
    <recommendedName>
        <fullName>Protein transport protein Sec61 gamma-1 subunit</fullName>
    </recommendedName>
</protein>
<reference key="1">
    <citation type="journal article" date="2000" name="Science">
        <title>The genome sequence of Drosophila melanogaster.</title>
        <authorList>
            <person name="Adams M.D."/>
            <person name="Celniker S.E."/>
            <person name="Holt R.A."/>
            <person name="Evans C.A."/>
            <person name="Gocayne J.D."/>
            <person name="Amanatides P.G."/>
            <person name="Scherer S.E."/>
            <person name="Li P.W."/>
            <person name="Hoskins R.A."/>
            <person name="Galle R.F."/>
            <person name="George R.A."/>
            <person name="Lewis S.E."/>
            <person name="Richards S."/>
            <person name="Ashburner M."/>
            <person name="Henderson S.N."/>
            <person name="Sutton G.G."/>
            <person name="Wortman J.R."/>
            <person name="Yandell M.D."/>
            <person name="Zhang Q."/>
            <person name="Chen L.X."/>
            <person name="Brandon R.C."/>
            <person name="Rogers Y.-H.C."/>
            <person name="Blazej R.G."/>
            <person name="Champe M."/>
            <person name="Pfeiffer B.D."/>
            <person name="Wan K.H."/>
            <person name="Doyle C."/>
            <person name="Baxter E.G."/>
            <person name="Helt G."/>
            <person name="Nelson C.R."/>
            <person name="Miklos G.L.G."/>
            <person name="Abril J.F."/>
            <person name="Agbayani A."/>
            <person name="An H.-J."/>
            <person name="Andrews-Pfannkoch C."/>
            <person name="Baldwin D."/>
            <person name="Ballew R.M."/>
            <person name="Basu A."/>
            <person name="Baxendale J."/>
            <person name="Bayraktaroglu L."/>
            <person name="Beasley E.M."/>
            <person name="Beeson K.Y."/>
            <person name="Benos P.V."/>
            <person name="Berman B.P."/>
            <person name="Bhandari D."/>
            <person name="Bolshakov S."/>
            <person name="Borkova D."/>
            <person name="Botchan M.R."/>
            <person name="Bouck J."/>
            <person name="Brokstein P."/>
            <person name="Brottier P."/>
            <person name="Burtis K.C."/>
            <person name="Busam D.A."/>
            <person name="Butler H."/>
            <person name="Cadieu E."/>
            <person name="Center A."/>
            <person name="Chandra I."/>
            <person name="Cherry J.M."/>
            <person name="Cawley S."/>
            <person name="Dahlke C."/>
            <person name="Davenport L.B."/>
            <person name="Davies P."/>
            <person name="de Pablos B."/>
            <person name="Delcher A."/>
            <person name="Deng Z."/>
            <person name="Mays A.D."/>
            <person name="Dew I."/>
            <person name="Dietz S.M."/>
            <person name="Dodson K."/>
            <person name="Doup L.E."/>
            <person name="Downes M."/>
            <person name="Dugan-Rocha S."/>
            <person name="Dunkov B.C."/>
            <person name="Dunn P."/>
            <person name="Durbin K.J."/>
            <person name="Evangelista C.C."/>
            <person name="Ferraz C."/>
            <person name="Ferriera S."/>
            <person name="Fleischmann W."/>
            <person name="Fosler C."/>
            <person name="Gabrielian A.E."/>
            <person name="Garg N.S."/>
            <person name="Gelbart W.M."/>
            <person name="Glasser K."/>
            <person name="Glodek A."/>
            <person name="Gong F."/>
            <person name="Gorrell J.H."/>
            <person name="Gu Z."/>
            <person name="Guan P."/>
            <person name="Harris M."/>
            <person name="Harris N.L."/>
            <person name="Harvey D.A."/>
            <person name="Heiman T.J."/>
            <person name="Hernandez J.R."/>
            <person name="Houck J."/>
            <person name="Hostin D."/>
            <person name="Houston K.A."/>
            <person name="Howland T.J."/>
            <person name="Wei M.-H."/>
            <person name="Ibegwam C."/>
            <person name="Jalali M."/>
            <person name="Kalush F."/>
            <person name="Karpen G.H."/>
            <person name="Ke Z."/>
            <person name="Kennison J.A."/>
            <person name="Ketchum K.A."/>
            <person name="Kimmel B.E."/>
            <person name="Kodira C.D."/>
            <person name="Kraft C.L."/>
            <person name="Kravitz S."/>
            <person name="Kulp D."/>
            <person name="Lai Z."/>
            <person name="Lasko P."/>
            <person name="Lei Y."/>
            <person name="Levitsky A.A."/>
            <person name="Li J.H."/>
            <person name="Li Z."/>
            <person name="Liang Y."/>
            <person name="Lin X."/>
            <person name="Liu X."/>
            <person name="Mattei B."/>
            <person name="McIntosh T.C."/>
            <person name="McLeod M.P."/>
            <person name="McPherson D."/>
            <person name="Merkulov G."/>
            <person name="Milshina N.V."/>
            <person name="Mobarry C."/>
            <person name="Morris J."/>
            <person name="Moshrefi A."/>
            <person name="Mount S.M."/>
            <person name="Moy M."/>
            <person name="Murphy B."/>
            <person name="Murphy L."/>
            <person name="Muzny D.M."/>
            <person name="Nelson D.L."/>
            <person name="Nelson D.R."/>
            <person name="Nelson K.A."/>
            <person name="Nixon K."/>
            <person name="Nusskern D.R."/>
            <person name="Pacleb J.M."/>
            <person name="Palazzolo M."/>
            <person name="Pittman G.S."/>
            <person name="Pan S."/>
            <person name="Pollard J."/>
            <person name="Puri V."/>
            <person name="Reese M.G."/>
            <person name="Reinert K."/>
            <person name="Remington K."/>
            <person name="Saunders R.D.C."/>
            <person name="Scheeler F."/>
            <person name="Shen H."/>
            <person name="Shue B.C."/>
            <person name="Siden-Kiamos I."/>
            <person name="Simpson M."/>
            <person name="Skupski M.P."/>
            <person name="Smith T.J."/>
            <person name="Spier E."/>
            <person name="Spradling A.C."/>
            <person name="Stapleton M."/>
            <person name="Strong R."/>
            <person name="Sun E."/>
            <person name="Svirskas R."/>
            <person name="Tector C."/>
            <person name="Turner R."/>
            <person name="Venter E."/>
            <person name="Wang A.H."/>
            <person name="Wang X."/>
            <person name="Wang Z.-Y."/>
            <person name="Wassarman D.A."/>
            <person name="Weinstock G.M."/>
            <person name="Weissenbach J."/>
            <person name="Williams S.M."/>
            <person name="Woodage T."/>
            <person name="Worley K.C."/>
            <person name="Wu D."/>
            <person name="Yang S."/>
            <person name="Yao Q.A."/>
            <person name="Ye J."/>
            <person name="Yeh R.-F."/>
            <person name="Zaveri J.S."/>
            <person name="Zhan M."/>
            <person name="Zhang G."/>
            <person name="Zhao Q."/>
            <person name="Zheng L."/>
            <person name="Zheng X.H."/>
            <person name="Zhong F.N."/>
            <person name="Zhong W."/>
            <person name="Zhou X."/>
            <person name="Zhu S.C."/>
            <person name="Zhu X."/>
            <person name="Smith H.O."/>
            <person name="Gibbs R.A."/>
            <person name="Myers E.W."/>
            <person name="Rubin G.M."/>
            <person name="Venter J.C."/>
        </authorList>
    </citation>
    <scope>NUCLEOTIDE SEQUENCE [LARGE SCALE GENOMIC DNA]</scope>
    <source>
        <strain>Berkeley</strain>
    </source>
</reference>
<reference key="2">
    <citation type="journal article" date="2002" name="Genome Biol.">
        <title>Annotation of the Drosophila melanogaster euchromatic genome: a systematic review.</title>
        <authorList>
            <person name="Misra S."/>
            <person name="Crosby M.A."/>
            <person name="Mungall C.J."/>
            <person name="Matthews B.B."/>
            <person name="Campbell K.S."/>
            <person name="Hradecky P."/>
            <person name="Huang Y."/>
            <person name="Kaminker J.S."/>
            <person name="Millburn G.H."/>
            <person name="Prochnik S.E."/>
            <person name="Smith C.D."/>
            <person name="Tupy J.L."/>
            <person name="Whitfield E.J."/>
            <person name="Bayraktaroglu L."/>
            <person name="Berman B.P."/>
            <person name="Bettencourt B.R."/>
            <person name="Celniker S.E."/>
            <person name="de Grey A.D.N.J."/>
            <person name="Drysdale R.A."/>
            <person name="Harris N.L."/>
            <person name="Richter J."/>
            <person name="Russo S."/>
            <person name="Schroeder A.J."/>
            <person name="Shu S.Q."/>
            <person name="Stapleton M."/>
            <person name="Yamada C."/>
            <person name="Ashburner M."/>
            <person name="Gelbart W.M."/>
            <person name="Rubin G.M."/>
            <person name="Lewis S.E."/>
        </authorList>
    </citation>
    <scope>GENOME REANNOTATION</scope>
    <source>
        <strain>Berkeley</strain>
    </source>
</reference>
<reference key="3">
    <citation type="journal article" date="2002" name="Genome Biol.">
        <title>A Drosophila full-length cDNA resource.</title>
        <authorList>
            <person name="Stapleton M."/>
            <person name="Carlson J.W."/>
            <person name="Brokstein P."/>
            <person name="Yu C."/>
            <person name="Champe M."/>
            <person name="George R.A."/>
            <person name="Guarin H."/>
            <person name="Kronmiller B."/>
            <person name="Pacleb J.M."/>
            <person name="Park S."/>
            <person name="Wan K.H."/>
            <person name="Rubin G.M."/>
            <person name="Celniker S.E."/>
        </authorList>
    </citation>
    <scope>NUCLEOTIDE SEQUENCE [LARGE SCALE MRNA]</scope>
    <source>
        <strain>Berkeley</strain>
        <tissue>Ovary</tissue>
    </source>
</reference>
<organism>
    <name type="scientific">Drosophila melanogaster</name>
    <name type="common">Fruit fly</name>
    <dbReference type="NCBI Taxonomy" id="7227"/>
    <lineage>
        <taxon>Eukaryota</taxon>
        <taxon>Metazoa</taxon>
        <taxon>Ecdysozoa</taxon>
        <taxon>Arthropoda</taxon>
        <taxon>Hexapoda</taxon>
        <taxon>Insecta</taxon>
        <taxon>Pterygota</taxon>
        <taxon>Neoptera</taxon>
        <taxon>Endopterygota</taxon>
        <taxon>Diptera</taxon>
        <taxon>Brachycera</taxon>
        <taxon>Muscomorpha</taxon>
        <taxon>Ephydroidea</taxon>
        <taxon>Drosophilidae</taxon>
        <taxon>Drosophila</taxon>
        <taxon>Sophophora</taxon>
    </lineage>
</organism>
<gene>
    <name type="primary">SEC61G1</name>
    <name type="ORF">CG8860</name>
</gene>
<feature type="chain" id="PRO_0000104202" description="Protein transport protein Sec61 gamma-1 subunit">
    <location>
        <begin position="1"/>
        <end position="68"/>
    </location>
</feature>
<feature type="topological domain" description="Cytoplasmic" evidence="2">
    <location>
        <begin position="1"/>
        <end position="32"/>
    </location>
</feature>
<feature type="transmembrane region" description="Helical" evidence="2">
    <location>
        <begin position="33"/>
        <end position="61"/>
    </location>
</feature>
<feature type="topological domain" description="Extracellular" evidence="2">
    <location>
        <begin position="62"/>
        <end position="68"/>
    </location>
</feature>
<keyword id="KW-0256">Endoplasmic reticulum</keyword>
<keyword id="KW-0472">Membrane</keyword>
<keyword id="KW-0653">Protein transport</keyword>
<keyword id="KW-1185">Reference proteome</keyword>
<keyword id="KW-0811">Translocation</keyword>
<keyword id="KW-0812">Transmembrane</keyword>
<keyword id="KW-1133">Transmembrane helix</keyword>
<keyword id="KW-0813">Transport</keyword>
<accession>Q9V668</accession>
<proteinExistence type="inferred from homology"/>
<dbReference type="EMBL" id="AE013599">
    <property type="protein sequence ID" value="AAF58563.1"/>
    <property type="molecule type" value="Genomic_DNA"/>
</dbReference>
<dbReference type="EMBL" id="AY118846">
    <property type="protein sequence ID" value="AAM50706.1"/>
    <property type="molecule type" value="mRNA"/>
</dbReference>
<dbReference type="RefSeq" id="NP_610738.1">
    <property type="nucleotide sequence ID" value="NM_136894.3"/>
</dbReference>
<dbReference type="SMR" id="Q9V668"/>
<dbReference type="BioGRID" id="62091">
    <property type="interactions" value="6"/>
</dbReference>
<dbReference type="ComplexPortal" id="CPX-2647">
    <property type="entry name" value="SEC61 translocon complex, SEC61G1 variant"/>
</dbReference>
<dbReference type="FunCoup" id="Q9V668">
    <property type="interactions" value="530"/>
</dbReference>
<dbReference type="IntAct" id="Q9V668">
    <property type="interactions" value="4"/>
</dbReference>
<dbReference type="STRING" id="7227.FBpp0087119"/>
<dbReference type="PaxDb" id="7227-FBpp0087119"/>
<dbReference type="DNASU" id="36310"/>
<dbReference type="EnsemblMetazoa" id="FBtr0088011">
    <property type="protein sequence ID" value="FBpp0087119"/>
    <property type="gene ID" value="FBgn0033691"/>
</dbReference>
<dbReference type="GeneID" id="36310"/>
<dbReference type="KEGG" id="dme:Dmel_CG8860"/>
<dbReference type="UCSC" id="CG8860-RA">
    <property type="organism name" value="d. melanogaster"/>
</dbReference>
<dbReference type="AGR" id="FB:FBgn0033691"/>
<dbReference type="FlyBase" id="FBgn0033691">
    <property type="gene designation" value="CG8860"/>
</dbReference>
<dbReference type="VEuPathDB" id="VectorBase:FBgn0033691"/>
<dbReference type="eggNOG" id="KOG3498">
    <property type="taxonomic scope" value="Eukaryota"/>
</dbReference>
<dbReference type="GeneTree" id="ENSGT00390000001319"/>
<dbReference type="HOGENOM" id="CLU_167752_2_0_1"/>
<dbReference type="InParanoid" id="Q9V668"/>
<dbReference type="OMA" id="KPDQKEY"/>
<dbReference type="OrthoDB" id="2401875at2759"/>
<dbReference type="PhylomeDB" id="Q9V668"/>
<dbReference type="SignaLink" id="Q9V668"/>
<dbReference type="BioGRID-ORCS" id="36310">
    <property type="hits" value="0 hits in 1 CRISPR screen"/>
</dbReference>
<dbReference type="ChiTaRS" id="CG8860">
    <property type="organism name" value="fly"/>
</dbReference>
<dbReference type="GenomeRNAi" id="36310"/>
<dbReference type="PRO" id="PR:Q9V668"/>
<dbReference type="Proteomes" id="UP000000803">
    <property type="component" value="Chromosome 2R"/>
</dbReference>
<dbReference type="Bgee" id="FBgn0033691">
    <property type="expression patterns" value="Expressed in spermathecum and 202 other cell types or tissues"/>
</dbReference>
<dbReference type="ExpressionAtlas" id="Q9V668">
    <property type="expression patterns" value="baseline and differential"/>
</dbReference>
<dbReference type="GO" id="GO:0005784">
    <property type="term" value="C:Sec61 translocon complex"/>
    <property type="evidence" value="ECO:0000250"/>
    <property type="project" value="FlyBase"/>
</dbReference>
<dbReference type="GO" id="GO:0071261">
    <property type="term" value="C:Ssh1 translocon complex"/>
    <property type="evidence" value="ECO:0000318"/>
    <property type="project" value="GO_Central"/>
</dbReference>
<dbReference type="GO" id="GO:0008320">
    <property type="term" value="F:protein transmembrane transporter activity"/>
    <property type="evidence" value="ECO:0000318"/>
    <property type="project" value="GO_Central"/>
</dbReference>
<dbReference type="GO" id="GO:0031204">
    <property type="term" value="P:post-translational protein targeting to membrane, translocation"/>
    <property type="evidence" value="ECO:0000318"/>
    <property type="project" value="GO_Central"/>
</dbReference>
<dbReference type="GO" id="GO:0006616">
    <property type="term" value="P:SRP-dependent cotranslational protein targeting to membrane, translocation"/>
    <property type="evidence" value="ECO:0000250"/>
    <property type="project" value="FlyBase"/>
</dbReference>
<dbReference type="FunFam" id="1.20.5.820:FF:000001">
    <property type="entry name" value="Transport protein Sec61 subunit gamma"/>
    <property type="match status" value="1"/>
</dbReference>
<dbReference type="Gene3D" id="1.20.5.820">
    <property type="entry name" value="Preprotein translocase SecE subunit"/>
    <property type="match status" value="1"/>
</dbReference>
<dbReference type="HAMAP" id="MF_00422">
    <property type="entry name" value="SecE"/>
    <property type="match status" value="1"/>
</dbReference>
<dbReference type="InterPro" id="IPR023391">
    <property type="entry name" value="Prot_translocase_SecE_dom_sf"/>
</dbReference>
<dbReference type="InterPro" id="IPR008158">
    <property type="entry name" value="Translocase_Sec61-g"/>
</dbReference>
<dbReference type="InterPro" id="IPR001901">
    <property type="entry name" value="Translocase_SecE/Sec61-g"/>
</dbReference>
<dbReference type="NCBIfam" id="TIGR00327">
    <property type="entry name" value="secE_euk_arch"/>
    <property type="match status" value="1"/>
</dbReference>
<dbReference type="PANTHER" id="PTHR12309">
    <property type="entry name" value="SEC61 GAMMA SUBUNIT"/>
    <property type="match status" value="1"/>
</dbReference>
<dbReference type="Pfam" id="PF00584">
    <property type="entry name" value="SecE"/>
    <property type="match status" value="1"/>
</dbReference>
<dbReference type="SUPFAM" id="SSF103456">
    <property type="entry name" value="Preprotein translocase SecE subunit"/>
    <property type="match status" value="1"/>
</dbReference>
<dbReference type="PROSITE" id="PS01067">
    <property type="entry name" value="SECE_SEC61G"/>
    <property type="match status" value="1"/>
</dbReference>